<name>IFNAF_BOVIN</name>
<feature type="signal peptide" evidence="1">
    <location>
        <begin position="1"/>
        <end position="23"/>
    </location>
</feature>
<feature type="chain" id="PRO_0000016389" description="Interferon alpha-F">
    <location>
        <begin position="24"/>
        <end position="189"/>
    </location>
</feature>
<feature type="disulfide bond" evidence="1">
    <location>
        <begin position="24"/>
        <end position="122"/>
    </location>
</feature>
<feature type="disulfide bond" evidence="1">
    <location>
        <begin position="52"/>
        <end position="162"/>
    </location>
</feature>
<organism>
    <name type="scientific">Bos taurus</name>
    <name type="common">Bovine</name>
    <dbReference type="NCBI Taxonomy" id="9913"/>
    <lineage>
        <taxon>Eukaryota</taxon>
        <taxon>Metazoa</taxon>
        <taxon>Chordata</taxon>
        <taxon>Craniata</taxon>
        <taxon>Vertebrata</taxon>
        <taxon>Euteleostomi</taxon>
        <taxon>Mammalia</taxon>
        <taxon>Eutheria</taxon>
        <taxon>Laurasiatheria</taxon>
        <taxon>Artiodactyla</taxon>
        <taxon>Ruminantia</taxon>
        <taxon>Pecora</taxon>
        <taxon>Bovidae</taxon>
        <taxon>Bovinae</taxon>
        <taxon>Bos</taxon>
    </lineage>
</organism>
<reference key="1">
    <citation type="journal article" date="1996" name="Immunogenetics">
        <title>The cloning of cattle interferon-A subtypes isolated from the gut epithelium of rotavirus-infected calves.</title>
        <authorList>
            <person name="Chaplin P.J."/>
            <person name="Parsons K.R."/>
            <person name="Collins B.A."/>
        </authorList>
    </citation>
    <scope>NUCLEOTIDE SEQUENCE [MRNA]</scope>
    <source>
        <tissue>Intestine</tissue>
    </source>
</reference>
<gene>
    <name type="primary">IFNAF</name>
    <name type="synonym">IFNA6</name>
</gene>
<proteinExistence type="evidence at transcript level"/>
<accession>P49876</accession>
<evidence type="ECO:0000250" key="1"/>
<evidence type="ECO:0000305" key="2"/>
<dbReference type="EMBL" id="X93087">
    <property type="protein sequence ID" value="CAA63636.1"/>
    <property type="molecule type" value="mRNA"/>
</dbReference>
<dbReference type="RefSeq" id="NP_001165513.1">
    <property type="nucleotide sequence ID" value="NM_001172042.1"/>
</dbReference>
<dbReference type="SMR" id="P49876"/>
<dbReference type="FunCoup" id="P49876">
    <property type="interactions" value="322"/>
</dbReference>
<dbReference type="PaxDb" id="9913-ENSBTAP00000030881"/>
<dbReference type="GeneID" id="100329210"/>
<dbReference type="KEGG" id="bta:100329210"/>
<dbReference type="CTD" id="100329210"/>
<dbReference type="eggNOG" id="ENOG502SQAC">
    <property type="taxonomic scope" value="Eukaryota"/>
</dbReference>
<dbReference type="InParanoid" id="P49876"/>
<dbReference type="OrthoDB" id="9833506at2759"/>
<dbReference type="Proteomes" id="UP000009136">
    <property type="component" value="Unplaced"/>
</dbReference>
<dbReference type="GO" id="GO:0005615">
    <property type="term" value="C:extracellular space"/>
    <property type="evidence" value="ECO:0000318"/>
    <property type="project" value="GO_Central"/>
</dbReference>
<dbReference type="GO" id="GO:0005125">
    <property type="term" value="F:cytokine activity"/>
    <property type="evidence" value="ECO:0000318"/>
    <property type="project" value="GO_Central"/>
</dbReference>
<dbReference type="GO" id="GO:0005132">
    <property type="term" value="F:type I interferon receptor binding"/>
    <property type="evidence" value="ECO:0000318"/>
    <property type="project" value="GO_Central"/>
</dbReference>
<dbReference type="GO" id="GO:0002250">
    <property type="term" value="P:adaptive immune response"/>
    <property type="evidence" value="ECO:0000318"/>
    <property type="project" value="GO_Central"/>
</dbReference>
<dbReference type="GO" id="GO:0002312">
    <property type="term" value="P:B cell activation involved in immune response"/>
    <property type="evidence" value="ECO:0000318"/>
    <property type="project" value="GO_Central"/>
</dbReference>
<dbReference type="GO" id="GO:0051607">
    <property type="term" value="P:defense response to virus"/>
    <property type="evidence" value="ECO:0007669"/>
    <property type="project" value="UniProtKB-KW"/>
</dbReference>
<dbReference type="GO" id="GO:0006959">
    <property type="term" value="P:humoral immune response"/>
    <property type="evidence" value="ECO:0000318"/>
    <property type="project" value="GO_Central"/>
</dbReference>
<dbReference type="GO" id="GO:0002323">
    <property type="term" value="P:natural killer cell activation involved in immune response"/>
    <property type="evidence" value="ECO:0000318"/>
    <property type="project" value="GO_Central"/>
</dbReference>
<dbReference type="GO" id="GO:0009891">
    <property type="term" value="P:positive regulation of biosynthetic process"/>
    <property type="evidence" value="ECO:0007669"/>
    <property type="project" value="UniProtKB-ARBA"/>
</dbReference>
<dbReference type="GO" id="GO:0043330">
    <property type="term" value="P:response to exogenous dsRNA"/>
    <property type="evidence" value="ECO:0000318"/>
    <property type="project" value="GO_Central"/>
</dbReference>
<dbReference type="GO" id="GO:0002286">
    <property type="term" value="P:T cell activation involved in immune response"/>
    <property type="evidence" value="ECO:0000318"/>
    <property type="project" value="GO_Central"/>
</dbReference>
<dbReference type="GO" id="GO:0060337">
    <property type="term" value="P:type I interferon-mediated signaling pathway"/>
    <property type="evidence" value="ECO:0000318"/>
    <property type="project" value="GO_Central"/>
</dbReference>
<dbReference type="CDD" id="cd00095">
    <property type="entry name" value="IFab"/>
    <property type="match status" value="1"/>
</dbReference>
<dbReference type="FunFam" id="1.20.1250.10:FF:000001">
    <property type="entry name" value="Interferon alpha"/>
    <property type="match status" value="1"/>
</dbReference>
<dbReference type="Gene3D" id="1.20.1250.10">
    <property type="match status" value="1"/>
</dbReference>
<dbReference type="InterPro" id="IPR009079">
    <property type="entry name" value="4_helix_cytokine-like_core"/>
</dbReference>
<dbReference type="InterPro" id="IPR000471">
    <property type="entry name" value="Interferon_alpha/beta/delta"/>
</dbReference>
<dbReference type="PANTHER" id="PTHR11691:SF60">
    <property type="entry name" value="INTERFERON ALPHA-5"/>
    <property type="match status" value="1"/>
</dbReference>
<dbReference type="PANTHER" id="PTHR11691">
    <property type="entry name" value="TYPE I INTERFERON"/>
    <property type="match status" value="1"/>
</dbReference>
<dbReference type="Pfam" id="PF00143">
    <property type="entry name" value="Interferon"/>
    <property type="match status" value="1"/>
</dbReference>
<dbReference type="PRINTS" id="PR00266">
    <property type="entry name" value="INTERFERONAB"/>
</dbReference>
<dbReference type="SMART" id="SM00076">
    <property type="entry name" value="IFabd"/>
    <property type="match status" value="1"/>
</dbReference>
<dbReference type="SUPFAM" id="SSF47266">
    <property type="entry name" value="4-helical cytokines"/>
    <property type="match status" value="1"/>
</dbReference>
<dbReference type="PROSITE" id="PS00252">
    <property type="entry name" value="INTERFERON_A_B_D"/>
    <property type="match status" value="1"/>
</dbReference>
<sequence length="189" mass="21290">MAPAWSLLLALLLLSCNAICSLGCHLPHIHSLANRRVLMLLQQLRRVSPSSCLQDRNDFALPQEALGGSQLQKAQAISVLHEVTQHTSQLFSTEGFGAVWDESLLDKLRAALDQQLTDLQACLRQEEGLRGAPLVKKDSSLAVRKYFHRLTLYLQEKRHSPCAWEVVRAEVMRAFSSSTNLQESFRRKD</sequence>
<protein>
    <recommendedName>
        <fullName>Interferon alpha-F</fullName>
    </recommendedName>
    <alternativeName>
        <fullName>IFN-alpha6</fullName>
    </alternativeName>
</protein>
<comment type="function">
    <text>Produced by macrophages, IFN-alpha have antiviral activities. Interferon stimulates the production of two enzymes: a protein kinase and an oligoadenylate synthetase.</text>
</comment>
<comment type="subcellular location">
    <subcellularLocation>
        <location>Secreted</location>
    </subcellularLocation>
</comment>
<comment type="similarity">
    <text evidence="2">Belongs to the alpha/beta interferon family.</text>
</comment>
<keyword id="KW-0051">Antiviral defense</keyword>
<keyword id="KW-0202">Cytokine</keyword>
<keyword id="KW-1015">Disulfide bond</keyword>
<keyword id="KW-1185">Reference proteome</keyword>
<keyword id="KW-0964">Secreted</keyword>
<keyword id="KW-0732">Signal</keyword>